<feature type="chain" id="PRO_0000225506" description="DNA-directed RNA polymerase subunit beta'">
    <location>
        <begin position="1"/>
        <end position="1409"/>
    </location>
</feature>
<feature type="binding site" evidence="1">
    <location>
        <position position="72"/>
    </location>
    <ligand>
        <name>Zn(2+)</name>
        <dbReference type="ChEBI" id="CHEBI:29105"/>
        <label>1</label>
    </ligand>
</feature>
<feature type="binding site" evidence="1">
    <location>
        <position position="74"/>
    </location>
    <ligand>
        <name>Zn(2+)</name>
        <dbReference type="ChEBI" id="CHEBI:29105"/>
        <label>1</label>
    </ligand>
</feature>
<feature type="binding site" evidence="1">
    <location>
        <position position="87"/>
    </location>
    <ligand>
        <name>Zn(2+)</name>
        <dbReference type="ChEBI" id="CHEBI:29105"/>
        <label>1</label>
    </ligand>
</feature>
<feature type="binding site" evidence="1">
    <location>
        <position position="90"/>
    </location>
    <ligand>
        <name>Zn(2+)</name>
        <dbReference type="ChEBI" id="CHEBI:29105"/>
        <label>1</label>
    </ligand>
</feature>
<feature type="binding site" evidence="1">
    <location>
        <position position="462"/>
    </location>
    <ligand>
        <name>Mg(2+)</name>
        <dbReference type="ChEBI" id="CHEBI:18420"/>
    </ligand>
</feature>
<feature type="binding site" evidence="1">
    <location>
        <position position="464"/>
    </location>
    <ligand>
        <name>Mg(2+)</name>
        <dbReference type="ChEBI" id="CHEBI:18420"/>
    </ligand>
</feature>
<feature type="binding site" evidence="1">
    <location>
        <position position="466"/>
    </location>
    <ligand>
        <name>Mg(2+)</name>
        <dbReference type="ChEBI" id="CHEBI:18420"/>
    </ligand>
</feature>
<feature type="binding site" evidence="1">
    <location>
        <position position="816"/>
    </location>
    <ligand>
        <name>Zn(2+)</name>
        <dbReference type="ChEBI" id="CHEBI:29105"/>
        <label>2</label>
    </ligand>
</feature>
<feature type="binding site" evidence="1">
    <location>
        <position position="890"/>
    </location>
    <ligand>
        <name>Zn(2+)</name>
        <dbReference type="ChEBI" id="CHEBI:29105"/>
        <label>2</label>
    </ligand>
</feature>
<feature type="binding site" evidence="1">
    <location>
        <position position="897"/>
    </location>
    <ligand>
        <name>Zn(2+)</name>
        <dbReference type="ChEBI" id="CHEBI:29105"/>
        <label>2</label>
    </ligand>
</feature>
<feature type="binding site" evidence="1">
    <location>
        <position position="900"/>
    </location>
    <ligand>
        <name>Zn(2+)</name>
        <dbReference type="ChEBI" id="CHEBI:29105"/>
        <label>2</label>
    </ligand>
</feature>
<comment type="function">
    <text evidence="1">DNA-dependent RNA polymerase catalyzes the transcription of DNA into RNA using the four ribonucleoside triphosphates as substrates.</text>
</comment>
<comment type="catalytic activity">
    <reaction evidence="1">
        <text>RNA(n) + a ribonucleoside 5'-triphosphate = RNA(n+1) + diphosphate</text>
        <dbReference type="Rhea" id="RHEA:21248"/>
        <dbReference type="Rhea" id="RHEA-COMP:14527"/>
        <dbReference type="Rhea" id="RHEA-COMP:17342"/>
        <dbReference type="ChEBI" id="CHEBI:33019"/>
        <dbReference type="ChEBI" id="CHEBI:61557"/>
        <dbReference type="ChEBI" id="CHEBI:140395"/>
        <dbReference type="EC" id="2.7.7.6"/>
    </reaction>
</comment>
<comment type="cofactor">
    <cofactor evidence="1">
        <name>Mg(2+)</name>
        <dbReference type="ChEBI" id="CHEBI:18420"/>
    </cofactor>
    <text evidence="1">Binds 1 Mg(2+) ion per subunit.</text>
</comment>
<comment type="cofactor">
    <cofactor evidence="1">
        <name>Zn(2+)</name>
        <dbReference type="ChEBI" id="CHEBI:29105"/>
    </cofactor>
    <text evidence="1">Binds 2 Zn(2+) ions per subunit.</text>
</comment>
<comment type="subunit">
    <text evidence="1">The RNAP catalytic core consists of 2 alpha, 1 beta, 1 beta' and 1 omega subunit. When a sigma factor is associated with the core the holoenzyme is formed, which can initiate transcription.</text>
</comment>
<comment type="similarity">
    <text evidence="1">Belongs to the RNA polymerase beta' chain family.</text>
</comment>
<dbReference type="EC" id="2.7.7.6" evidence="1"/>
<dbReference type="EMBL" id="CR555306">
    <property type="protein sequence ID" value="CAI08276.1"/>
    <property type="molecule type" value="Genomic_DNA"/>
</dbReference>
<dbReference type="RefSeq" id="WP_011237967.1">
    <property type="nucleotide sequence ID" value="NC_006513.1"/>
</dbReference>
<dbReference type="SMR" id="Q5P338"/>
<dbReference type="STRING" id="76114.ebA3819"/>
<dbReference type="KEGG" id="eba:ebA3819"/>
<dbReference type="eggNOG" id="COG0086">
    <property type="taxonomic scope" value="Bacteria"/>
</dbReference>
<dbReference type="HOGENOM" id="CLU_000524_3_1_4"/>
<dbReference type="OrthoDB" id="9815296at2"/>
<dbReference type="Proteomes" id="UP000006552">
    <property type="component" value="Chromosome"/>
</dbReference>
<dbReference type="GO" id="GO:0000428">
    <property type="term" value="C:DNA-directed RNA polymerase complex"/>
    <property type="evidence" value="ECO:0007669"/>
    <property type="project" value="UniProtKB-KW"/>
</dbReference>
<dbReference type="GO" id="GO:0003677">
    <property type="term" value="F:DNA binding"/>
    <property type="evidence" value="ECO:0007669"/>
    <property type="project" value="UniProtKB-UniRule"/>
</dbReference>
<dbReference type="GO" id="GO:0003899">
    <property type="term" value="F:DNA-directed RNA polymerase activity"/>
    <property type="evidence" value="ECO:0007669"/>
    <property type="project" value="UniProtKB-UniRule"/>
</dbReference>
<dbReference type="GO" id="GO:0000287">
    <property type="term" value="F:magnesium ion binding"/>
    <property type="evidence" value="ECO:0007669"/>
    <property type="project" value="UniProtKB-UniRule"/>
</dbReference>
<dbReference type="GO" id="GO:0008270">
    <property type="term" value="F:zinc ion binding"/>
    <property type="evidence" value="ECO:0007669"/>
    <property type="project" value="UniProtKB-UniRule"/>
</dbReference>
<dbReference type="GO" id="GO:0006351">
    <property type="term" value="P:DNA-templated transcription"/>
    <property type="evidence" value="ECO:0007669"/>
    <property type="project" value="UniProtKB-UniRule"/>
</dbReference>
<dbReference type="CDD" id="cd02655">
    <property type="entry name" value="RNAP_beta'_C"/>
    <property type="match status" value="1"/>
</dbReference>
<dbReference type="CDD" id="cd01609">
    <property type="entry name" value="RNAP_beta'_N"/>
    <property type="match status" value="1"/>
</dbReference>
<dbReference type="FunFam" id="1.10.132.30:FF:000003">
    <property type="entry name" value="DNA-directed RNA polymerase subunit beta"/>
    <property type="match status" value="1"/>
</dbReference>
<dbReference type="FunFam" id="1.10.150.390:FF:000002">
    <property type="entry name" value="DNA-directed RNA polymerase subunit beta"/>
    <property type="match status" value="1"/>
</dbReference>
<dbReference type="FunFam" id="1.10.40.90:FF:000001">
    <property type="entry name" value="DNA-directed RNA polymerase subunit beta"/>
    <property type="match status" value="1"/>
</dbReference>
<dbReference type="FunFam" id="4.10.860.120:FF:000001">
    <property type="entry name" value="DNA-directed RNA polymerase subunit beta"/>
    <property type="match status" value="1"/>
</dbReference>
<dbReference type="Gene3D" id="1.10.132.30">
    <property type="match status" value="1"/>
</dbReference>
<dbReference type="Gene3D" id="1.10.150.390">
    <property type="match status" value="1"/>
</dbReference>
<dbReference type="Gene3D" id="1.10.1790.20">
    <property type="match status" value="1"/>
</dbReference>
<dbReference type="Gene3D" id="1.10.40.90">
    <property type="match status" value="1"/>
</dbReference>
<dbReference type="Gene3D" id="2.40.40.20">
    <property type="match status" value="1"/>
</dbReference>
<dbReference type="Gene3D" id="2.40.50.100">
    <property type="match status" value="3"/>
</dbReference>
<dbReference type="Gene3D" id="4.10.860.120">
    <property type="entry name" value="RNA polymerase II, clamp domain"/>
    <property type="match status" value="1"/>
</dbReference>
<dbReference type="Gene3D" id="1.10.274.100">
    <property type="entry name" value="RNA polymerase Rpb1, domain 3"/>
    <property type="match status" value="1"/>
</dbReference>
<dbReference type="HAMAP" id="MF_01322">
    <property type="entry name" value="RNApol_bact_RpoC"/>
    <property type="match status" value="1"/>
</dbReference>
<dbReference type="InterPro" id="IPR045867">
    <property type="entry name" value="DNA-dir_RpoC_beta_prime"/>
</dbReference>
<dbReference type="InterPro" id="IPR012754">
    <property type="entry name" value="DNA-dir_RpoC_beta_prime_bact"/>
</dbReference>
<dbReference type="InterPro" id="IPR000722">
    <property type="entry name" value="RNA_pol_asu"/>
</dbReference>
<dbReference type="InterPro" id="IPR006592">
    <property type="entry name" value="RNA_pol_N"/>
</dbReference>
<dbReference type="InterPro" id="IPR007080">
    <property type="entry name" value="RNA_pol_Rpb1_1"/>
</dbReference>
<dbReference type="InterPro" id="IPR007066">
    <property type="entry name" value="RNA_pol_Rpb1_3"/>
</dbReference>
<dbReference type="InterPro" id="IPR042102">
    <property type="entry name" value="RNA_pol_Rpb1_3_sf"/>
</dbReference>
<dbReference type="InterPro" id="IPR007083">
    <property type="entry name" value="RNA_pol_Rpb1_4"/>
</dbReference>
<dbReference type="InterPro" id="IPR007081">
    <property type="entry name" value="RNA_pol_Rpb1_5"/>
</dbReference>
<dbReference type="InterPro" id="IPR044893">
    <property type="entry name" value="RNA_pol_Rpb1_clamp_domain"/>
</dbReference>
<dbReference type="InterPro" id="IPR038120">
    <property type="entry name" value="Rpb1_funnel_sf"/>
</dbReference>
<dbReference type="NCBIfam" id="TIGR02386">
    <property type="entry name" value="rpoC_TIGR"/>
    <property type="match status" value="1"/>
</dbReference>
<dbReference type="PANTHER" id="PTHR19376">
    <property type="entry name" value="DNA-DIRECTED RNA POLYMERASE"/>
    <property type="match status" value="1"/>
</dbReference>
<dbReference type="PANTHER" id="PTHR19376:SF54">
    <property type="entry name" value="DNA-DIRECTED RNA POLYMERASE SUBUNIT BETA"/>
    <property type="match status" value="1"/>
</dbReference>
<dbReference type="Pfam" id="PF04997">
    <property type="entry name" value="RNA_pol_Rpb1_1"/>
    <property type="match status" value="1"/>
</dbReference>
<dbReference type="Pfam" id="PF00623">
    <property type="entry name" value="RNA_pol_Rpb1_2"/>
    <property type="match status" value="1"/>
</dbReference>
<dbReference type="Pfam" id="PF04983">
    <property type="entry name" value="RNA_pol_Rpb1_3"/>
    <property type="match status" value="1"/>
</dbReference>
<dbReference type="Pfam" id="PF05000">
    <property type="entry name" value="RNA_pol_Rpb1_4"/>
    <property type="match status" value="1"/>
</dbReference>
<dbReference type="Pfam" id="PF04998">
    <property type="entry name" value="RNA_pol_Rpb1_5"/>
    <property type="match status" value="1"/>
</dbReference>
<dbReference type="SMART" id="SM00663">
    <property type="entry name" value="RPOLA_N"/>
    <property type="match status" value="1"/>
</dbReference>
<dbReference type="SUPFAM" id="SSF64484">
    <property type="entry name" value="beta and beta-prime subunits of DNA dependent RNA-polymerase"/>
    <property type="match status" value="1"/>
</dbReference>
<evidence type="ECO:0000255" key="1">
    <source>
        <dbReference type="HAMAP-Rule" id="MF_01322"/>
    </source>
</evidence>
<sequence length="1409" mass="155260">MKSLLADLFKQTLPNEDQFDAITIGLASPDKIRSWSYGEVKKPETINYRTFKPERDGLFCAKIFGPVKDYECLCGKYKRLKHRGVICEKCGVEVTLSKVRRERMAHIELASPTAHIWFLKSLPSRLGMVLDMTLRDIERVLYFEAFVVVEPGMTPLNRGQLLTEDDYLAKVEEYGDDFDALMGAEGIRGLLRTLDVKLEIEKLRGDLETTGSEAKIKKFSKRLKVLEAFMQSGIKPEWMILEVLPVLPPDLRPLVPLDGGRFATSDLNDLYRRVINRNNRLKRLLELKAPEIIVRNEKRMLQESVDSLLDNGRRGKAMTGANKRPLKSLADMIKGKGGRFRQNLLGKRVDYSGRSVIVVGPQLKLHQCGLPKLMALELFKPFIFNKLELMGLATTIKQAKKMVESQEPVVWDILEEVIREHPVMLNRAPTLHRLGIQAFEPVLIEGKAIQLHPLVCVAFNADFDGDQMAVHVPLSLEAQMEARTLMLASNNVLSPANGEPIIVPSQDIVLGLYYATREGVNVAGEGMAFSDVGELKRAYESKQLSLHARVSVRLKEVEVSAEGERRDKITRYNTTAGRAMLSEILPPGLPFSVLDKALKKKEISRLINASFRRCGLKETVVFADKLMQFGFRLATRAGISIAVKDMLVPRQKDVLIHAAEQEVKEIARQYTSGLVTDGERYNKVVDIWGRAGDQVAKAMMDQLGQEDVVNRHGDTVKQESFNSIYMMADSGARGSAAQIRQLAGMRGLMAKPDGSIIETPITTNFREGLNVLQYFISTHGARKGLADTALKTANSGYLTRRLVDVTQDLVVTEDDCGTRDGFVMKALIEGGEVIEPLRDRILGRVCAEDVVNPESQETVIEAGSLLGEDAVDLIESLGIDEVKVRTALTCETRYGLCGKCYGRDLGRGSQVNVGEAVGVIAAQSIGEPGTQLTMRTFHVGGAASRAAAASGVESKSAGTVRFAGNMRYVSNAKGEKIIIARSAEVVVADDMGRERERHKLPYGATLLVDDGAPVKAGVLLATWDPHTRPIVTEYSGTVKFENVEEGATVAKQIDEVTGLSTLVVIDGKRRTSGASSKGVRPQVKLLDERGEEVKIAGTDHSVAITFQVGSLITVKDGQEVSVGDILARIPQESAKTRDITGGLPRVAELFEARPPKDAGVLAEYTGTVSFGKDTKGKQRLVITEADGTAHEFLIPKDKHVMVHDGQVVNKGELIVDGPADPHDILRLQGIEALARYIIDEVQDVYRLQGVKINDKHIEVIVRQMLRRVVINDAGNSRFIREEQVERSEVLDENDRIEAEGKLPAQYQNVLLGITKASLSTDSFISAASFQETTRVLTEAAIMGKRDDLRGLKENVIVGRLIPAGTGMAYHRNRKAQNAGEDLGPEHAWAEMQEVVPEVPADVSQDVQAG</sequence>
<proteinExistence type="inferred from homology"/>
<keyword id="KW-0240">DNA-directed RNA polymerase</keyword>
<keyword id="KW-0460">Magnesium</keyword>
<keyword id="KW-0479">Metal-binding</keyword>
<keyword id="KW-0548">Nucleotidyltransferase</keyword>
<keyword id="KW-1185">Reference proteome</keyword>
<keyword id="KW-0804">Transcription</keyword>
<keyword id="KW-0808">Transferase</keyword>
<keyword id="KW-0862">Zinc</keyword>
<accession>Q5P338</accession>
<organism>
    <name type="scientific">Aromatoleum aromaticum (strain DSM 19018 / LMG 30748 / EbN1)</name>
    <name type="common">Azoarcus sp. (strain EbN1)</name>
    <dbReference type="NCBI Taxonomy" id="76114"/>
    <lineage>
        <taxon>Bacteria</taxon>
        <taxon>Pseudomonadati</taxon>
        <taxon>Pseudomonadota</taxon>
        <taxon>Betaproteobacteria</taxon>
        <taxon>Rhodocyclales</taxon>
        <taxon>Rhodocyclaceae</taxon>
        <taxon>Aromatoleum</taxon>
    </lineage>
</organism>
<reference key="1">
    <citation type="journal article" date="2005" name="Arch. Microbiol.">
        <title>The genome sequence of an anaerobic aromatic-degrading denitrifying bacterium, strain EbN1.</title>
        <authorList>
            <person name="Rabus R."/>
            <person name="Kube M."/>
            <person name="Heider J."/>
            <person name="Beck A."/>
            <person name="Heitmann K."/>
            <person name="Widdel F."/>
            <person name="Reinhardt R."/>
        </authorList>
    </citation>
    <scope>NUCLEOTIDE SEQUENCE [LARGE SCALE GENOMIC DNA]</scope>
    <source>
        <strain>DSM 19018 / LMG 30748 / EbN1</strain>
    </source>
</reference>
<protein>
    <recommendedName>
        <fullName evidence="1">DNA-directed RNA polymerase subunit beta'</fullName>
        <shortName evidence="1">RNAP subunit beta'</shortName>
        <ecNumber evidence="1">2.7.7.6</ecNumber>
    </recommendedName>
    <alternativeName>
        <fullName evidence="1">RNA polymerase subunit beta'</fullName>
    </alternativeName>
    <alternativeName>
        <fullName evidence="1">Transcriptase subunit beta'</fullName>
    </alternativeName>
</protein>
<gene>
    <name evidence="1" type="primary">rpoC</name>
    <name type="ordered locus">AZOSEA21510</name>
    <name type="ORF">ebA3819</name>
</gene>
<name>RPOC_AROAE</name>